<proteinExistence type="inferred from homology"/>
<sequence>MIQAPRIALIAGEASGDHLGAGLIQQLRLRLPTAEFVGIGGDMMRSARCQTWFDTSELAVMGLTEVLRHLPRLLKIRREFCKRALAWHPDVLIGIDAPDFNLTVERWFKQRHIRTVHYVSPSIWAWREKRAAKIGASVDRVLCLFPMEPPIYARYGIDARFVGHPMADEIPYQTDRATARTALGLPLLSPVLAVLPGSRHSEISQLGSTFLEAAGQLSEHLPGLHVVIPAANTQCKPLLAEQLSRSTLPVMHSHLLDNSARTAMLAADVVLVASGTATLEAMLLKRPMVVAYKVAPLTYRIVKTLKLLKINRFALPNILAGEDLAPELIQKDCTAPALCAALLDWFKHPQKVTALQNRYLQLHTQLRRNASTRAAEAITELLPQR</sequence>
<feature type="chain" id="PRO_0000190195" description="Lipid-A-disaccharide synthase">
    <location>
        <begin position="1"/>
        <end position="385"/>
    </location>
</feature>
<protein>
    <recommendedName>
        <fullName>Lipid-A-disaccharide synthase</fullName>
        <ecNumber>2.4.1.182</ecNumber>
    </recommendedName>
</protein>
<dbReference type="EC" id="2.4.1.182"/>
<dbReference type="EMBL" id="AE003849">
    <property type="protein sequence ID" value="AAF83852.1"/>
    <property type="molecule type" value="Genomic_DNA"/>
</dbReference>
<dbReference type="PIR" id="A82731">
    <property type="entry name" value="A82731"/>
</dbReference>
<dbReference type="RefSeq" id="WP_010893561.1">
    <property type="nucleotide sequence ID" value="NC_002488.3"/>
</dbReference>
<dbReference type="SMR" id="Q9PEI6"/>
<dbReference type="STRING" id="160492.XF_1042"/>
<dbReference type="CAZy" id="GT19">
    <property type="family name" value="Glycosyltransferase Family 19"/>
</dbReference>
<dbReference type="KEGG" id="xfa:XF_1042"/>
<dbReference type="eggNOG" id="COG0763">
    <property type="taxonomic scope" value="Bacteria"/>
</dbReference>
<dbReference type="HOGENOM" id="CLU_036577_3_0_6"/>
<dbReference type="UniPathway" id="UPA00973"/>
<dbReference type="Proteomes" id="UP000000812">
    <property type="component" value="Chromosome"/>
</dbReference>
<dbReference type="GO" id="GO:0016020">
    <property type="term" value="C:membrane"/>
    <property type="evidence" value="ECO:0007669"/>
    <property type="project" value="GOC"/>
</dbReference>
<dbReference type="GO" id="GO:0008915">
    <property type="term" value="F:lipid-A-disaccharide synthase activity"/>
    <property type="evidence" value="ECO:0007669"/>
    <property type="project" value="UniProtKB-UniRule"/>
</dbReference>
<dbReference type="GO" id="GO:0005543">
    <property type="term" value="F:phospholipid binding"/>
    <property type="evidence" value="ECO:0007669"/>
    <property type="project" value="TreeGrafter"/>
</dbReference>
<dbReference type="GO" id="GO:0009245">
    <property type="term" value="P:lipid A biosynthetic process"/>
    <property type="evidence" value="ECO:0007669"/>
    <property type="project" value="UniProtKB-UniRule"/>
</dbReference>
<dbReference type="CDD" id="cd01635">
    <property type="entry name" value="Glycosyltransferase_GTB-type"/>
    <property type="match status" value="1"/>
</dbReference>
<dbReference type="HAMAP" id="MF_00392">
    <property type="entry name" value="LpxB"/>
    <property type="match status" value="1"/>
</dbReference>
<dbReference type="InterPro" id="IPR003835">
    <property type="entry name" value="Glyco_trans_19"/>
</dbReference>
<dbReference type="NCBIfam" id="TIGR00215">
    <property type="entry name" value="lpxB"/>
    <property type="match status" value="1"/>
</dbReference>
<dbReference type="PANTHER" id="PTHR30372">
    <property type="entry name" value="LIPID-A-DISACCHARIDE SYNTHASE"/>
    <property type="match status" value="1"/>
</dbReference>
<dbReference type="PANTHER" id="PTHR30372:SF4">
    <property type="entry name" value="LIPID-A-DISACCHARIDE SYNTHASE, MITOCHONDRIAL-RELATED"/>
    <property type="match status" value="1"/>
</dbReference>
<dbReference type="Pfam" id="PF02684">
    <property type="entry name" value="LpxB"/>
    <property type="match status" value="1"/>
</dbReference>
<dbReference type="SUPFAM" id="SSF53756">
    <property type="entry name" value="UDP-Glycosyltransferase/glycogen phosphorylase"/>
    <property type="match status" value="1"/>
</dbReference>
<comment type="function">
    <text evidence="1">Condensation of UDP-2,3-diacylglucosamine and 2,3-diacylglucosamine-1-phosphate to form lipid A disaccharide, a precursor of lipid A, a phosphorylated glycolipid that anchors the lipopolysaccharide to the outer membrane of the cell.</text>
</comment>
<comment type="catalytic activity">
    <reaction>
        <text>a lipid X + a UDP-2-N,3-O-bis[(3R)-3-hydroxyacyl]-alpha-D-glucosamine = a lipid A disaccharide + UDP + H(+)</text>
        <dbReference type="Rhea" id="RHEA:67828"/>
        <dbReference type="ChEBI" id="CHEBI:15378"/>
        <dbReference type="ChEBI" id="CHEBI:58223"/>
        <dbReference type="ChEBI" id="CHEBI:137748"/>
        <dbReference type="ChEBI" id="CHEBI:176338"/>
        <dbReference type="ChEBI" id="CHEBI:176343"/>
        <dbReference type="EC" id="2.4.1.182"/>
    </reaction>
</comment>
<comment type="pathway">
    <text>Bacterial outer membrane biogenesis; LPS lipid A biosynthesis.</text>
</comment>
<comment type="similarity">
    <text evidence="2">Belongs to the LpxB family.</text>
</comment>
<reference key="1">
    <citation type="journal article" date="2000" name="Nature">
        <title>The genome sequence of the plant pathogen Xylella fastidiosa.</title>
        <authorList>
            <person name="Simpson A.J.G."/>
            <person name="Reinach F.C."/>
            <person name="Arruda P."/>
            <person name="Abreu F.A."/>
            <person name="Acencio M."/>
            <person name="Alvarenga R."/>
            <person name="Alves L.M.C."/>
            <person name="Araya J.E."/>
            <person name="Baia G.S."/>
            <person name="Baptista C.S."/>
            <person name="Barros M.H."/>
            <person name="Bonaccorsi E.D."/>
            <person name="Bordin S."/>
            <person name="Bove J.M."/>
            <person name="Briones M.R.S."/>
            <person name="Bueno M.R.P."/>
            <person name="Camargo A.A."/>
            <person name="Camargo L.E.A."/>
            <person name="Carraro D.M."/>
            <person name="Carrer H."/>
            <person name="Colauto N.B."/>
            <person name="Colombo C."/>
            <person name="Costa F.F."/>
            <person name="Costa M.C.R."/>
            <person name="Costa-Neto C.M."/>
            <person name="Coutinho L.L."/>
            <person name="Cristofani M."/>
            <person name="Dias-Neto E."/>
            <person name="Docena C."/>
            <person name="El-Dorry H."/>
            <person name="Facincani A.P."/>
            <person name="Ferreira A.J.S."/>
            <person name="Ferreira V.C.A."/>
            <person name="Ferro J.A."/>
            <person name="Fraga J.S."/>
            <person name="Franca S.C."/>
            <person name="Franco M.C."/>
            <person name="Frohme M."/>
            <person name="Furlan L.R."/>
            <person name="Garnier M."/>
            <person name="Goldman G.H."/>
            <person name="Goldman M.H.S."/>
            <person name="Gomes S.L."/>
            <person name="Gruber A."/>
            <person name="Ho P.L."/>
            <person name="Hoheisel J.D."/>
            <person name="Junqueira M.L."/>
            <person name="Kemper E.L."/>
            <person name="Kitajima J.P."/>
            <person name="Krieger J.E."/>
            <person name="Kuramae E.E."/>
            <person name="Laigret F."/>
            <person name="Lambais M.R."/>
            <person name="Leite L.C.C."/>
            <person name="Lemos E.G.M."/>
            <person name="Lemos M.V.F."/>
            <person name="Lopes S.A."/>
            <person name="Lopes C.R."/>
            <person name="Machado J.A."/>
            <person name="Machado M.A."/>
            <person name="Madeira A.M.B.N."/>
            <person name="Madeira H.M.F."/>
            <person name="Marino C.L."/>
            <person name="Marques M.V."/>
            <person name="Martins E.A.L."/>
            <person name="Martins E.M.F."/>
            <person name="Matsukuma A.Y."/>
            <person name="Menck C.F.M."/>
            <person name="Miracca E.C."/>
            <person name="Miyaki C.Y."/>
            <person name="Monteiro-Vitorello C.B."/>
            <person name="Moon D.H."/>
            <person name="Nagai M.A."/>
            <person name="Nascimento A.L.T.O."/>
            <person name="Netto L.E.S."/>
            <person name="Nhani A. Jr."/>
            <person name="Nobrega F.G."/>
            <person name="Nunes L.R."/>
            <person name="Oliveira M.A."/>
            <person name="de Oliveira M.C."/>
            <person name="de Oliveira R.C."/>
            <person name="Palmieri D.A."/>
            <person name="Paris A."/>
            <person name="Peixoto B.R."/>
            <person name="Pereira G.A.G."/>
            <person name="Pereira H.A. Jr."/>
            <person name="Pesquero J.B."/>
            <person name="Quaggio R.B."/>
            <person name="Roberto P.G."/>
            <person name="Rodrigues V."/>
            <person name="de Rosa A.J.M."/>
            <person name="de Rosa V.E. Jr."/>
            <person name="de Sa R.G."/>
            <person name="Santelli R.V."/>
            <person name="Sawasaki H.E."/>
            <person name="da Silva A.C.R."/>
            <person name="da Silva A.M."/>
            <person name="da Silva F.R."/>
            <person name="Silva W.A. Jr."/>
            <person name="da Silveira J.F."/>
            <person name="Silvestri M.L.Z."/>
            <person name="Siqueira W.J."/>
            <person name="de Souza A.A."/>
            <person name="de Souza A.P."/>
            <person name="Terenzi M.F."/>
            <person name="Truffi D."/>
            <person name="Tsai S.M."/>
            <person name="Tsuhako M.H."/>
            <person name="Vallada H."/>
            <person name="Van Sluys M.A."/>
            <person name="Verjovski-Almeida S."/>
            <person name="Vettore A.L."/>
            <person name="Zago M.A."/>
            <person name="Zatz M."/>
            <person name="Meidanis J."/>
            <person name="Setubal J.C."/>
        </authorList>
    </citation>
    <scope>NUCLEOTIDE SEQUENCE [LARGE SCALE GENOMIC DNA]</scope>
    <source>
        <strain>9a5c</strain>
    </source>
</reference>
<organism>
    <name type="scientific">Xylella fastidiosa (strain 9a5c)</name>
    <dbReference type="NCBI Taxonomy" id="160492"/>
    <lineage>
        <taxon>Bacteria</taxon>
        <taxon>Pseudomonadati</taxon>
        <taxon>Pseudomonadota</taxon>
        <taxon>Gammaproteobacteria</taxon>
        <taxon>Lysobacterales</taxon>
        <taxon>Lysobacteraceae</taxon>
        <taxon>Xylella</taxon>
    </lineage>
</organism>
<gene>
    <name type="primary">lpxB</name>
    <name type="ordered locus">XF_1042</name>
</gene>
<keyword id="KW-0328">Glycosyltransferase</keyword>
<keyword id="KW-0441">Lipid A biosynthesis</keyword>
<keyword id="KW-0444">Lipid biosynthesis</keyword>
<keyword id="KW-0443">Lipid metabolism</keyword>
<keyword id="KW-0808">Transferase</keyword>
<name>LPXB_XYLFA</name>
<evidence type="ECO:0000250" key="1"/>
<evidence type="ECO:0000305" key="2"/>
<accession>Q9PEI6</accession>